<name>MNMC_SHEFN</name>
<keyword id="KW-0963">Cytoplasm</keyword>
<keyword id="KW-0274">FAD</keyword>
<keyword id="KW-0285">Flavoprotein</keyword>
<keyword id="KW-0489">Methyltransferase</keyword>
<keyword id="KW-0511">Multifunctional enzyme</keyword>
<keyword id="KW-0560">Oxidoreductase</keyword>
<keyword id="KW-1185">Reference proteome</keyword>
<keyword id="KW-0949">S-adenosyl-L-methionine</keyword>
<keyword id="KW-0808">Transferase</keyword>
<keyword id="KW-0819">tRNA processing</keyword>
<gene>
    <name evidence="1" type="primary">mnmC</name>
    <name type="ordered locus">Sfri_1390</name>
</gene>
<sequence>MNKTPLLSVSPNLHELHICELLGNNANQNSRYSHIVKQYIAEVLQSSDDKIAATNTQPHLLTLGQLGFGDGHEIILLLAALQEANLQNPLIQQQTRIHISVFEQGPVNCKQLQHTWQQQGLLDSDHHLFDFTQALLNGEIAAIEGCQRLSLLQNQIIIDLYQGSPLAQAKTIATPNKQRITHWFALPHTNQEAHSDQYFHQRSVWEYGRLSVDNATFLAASTNDENIAPTIKKQLAFCGFLSSTSFKSTDDIAIAERNALRQQLQQQFAYNPLPPLHSNNNSPIAIIGGGIASASLALSLAERGKDVIIYCKDDTLGQGASGNKQGAIYPLLTPENGSLSQFFQQVFLYSRRRIQALVDDGYDIGHEWCGVLHTGFDQRSQTRLDKIIDGQAWPSEIAFAVSPHQATQLANVDIDKPGFYYPLGGWACPFEFAQASIAKAQTLTKVRIVYNSDISSLESHSSGWQLFSAEDNTPIATHEQVVIASGAQLTQYKQTKNLQITGFRGQVSHVPPQGELAQLNTVICANGYLTPQHNQLHCVGASYVKDPQHLDFCPIEQHENSLKMKQSFPNSNWPNDIDVSNNDARVGVRMVSRDHFPVMGCAPDVEALFTRYAVQQQSKDKPSLWQHYWQTTPAPIYDGLYVLGGLGSRGLSSGPLVAECLAANLCGELSPLSVELQALLSPNRMWLRKLLKGKALM</sequence>
<comment type="function">
    <text evidence="1">Catalyzes the last two steps in the biosynthesis of 5-methylaminomethyl-2-thiouridine (mnm(5)s(2)U) at the wobble position (U34) in tRNA. Catalyzes the FAD-dependent demodification of cmnm(5)s(2)U34 to nm(5)s(2)U34, followed by the transfer of a methyl group from S-adenosyl-L-methionine to nm(5)s(2)U34, to form mnm(5)s(2)U34.</text>
</comment>
<comment type="catalytic activity">
    <reaction evidence="1">
        <text>5-aminomethyl-2-thiouridine(34) in tRNA + S-adenosyl-L-methionine = 5-methylaminomethyl-2-thiouridine(34) in tRNA + S-adenosyl-L-homocysteine + H(+)</text>
        <dbReference type="Rhea" id="RHEA:19569"/>
        <dbReference type="Rhea" id="RHEA-COMP:10195"/>
        <dbReference type="Rhea" id="RHEA-COMP:10197"/>
        <dbReference type="ChEBI" id="CHEBI:15378"/>
        <dbReference type="ChEBI" id="CHEBI:57856"/>
        <dbReference type="ChEBI" id="CHEBI:59789"/>
        <dbReference type="ChEBI" id="CHEBI:74454"/>
        <dbReference type="ChEBI" id="CHEBI:74455"/>
        <dbReference type="EC" id="2.1.1.61"/>
    </reaction>
</comment>
<comment type="cofactor">
    <cofactor evidence="1">
        <name>FAD</name>
        <dbReference type="ChEBI" id="CHEBI:57692"/>
    </cofactor>
</comment>
<comment type="subcellular location">
    <subcellularLocation>
        <location evidence="1">Cytoplasm</location>
    </subcellularLocation>
</comment>
<comment type="similarity">
    <text evidence="1">In the N-terminal section; belongs to the methyltransferase superfamily. tRNA (mnm(5)s(2)U34)-methyltransferase family.</text>
</comment>
<comment type="similarity">
    <text evidence="1">In the C-terminal section; belongs to the DAO family.</text>
</comment>
<dbReference type="EC" id="2.1.1.61" evidence="1"/>
<dbReference type="EC" id="1.5.-.-" evidence="1"/>
<dbReference type="EMBL" id="CP000447">
    <property type="protein sequence ID" value="ABI71242.1"/>
    <property type="molecule type" value="Genomic_DNA"/>
</dbReference>
<dbReference type="RefSeq" id="WP_011636863.1">
    <property type="nucleotide sequence ID" value="NC_008345.1"/>
</dbReference>
<dbReference type="SMR" id="Q084S3"/>
<dbReference type="STRING" id="318167.Sfri_1390"/>
<dbReference type="KEGG" id="sfr:Sfri_1390"/>
<dbReference type="eggNOG" id="COG0665">
    <property type="taxonomic scope" value="Bacteria"/>
</dbReference>
<dbReference type="eggNOG" id="COG4121">
    <property type="taxonomic scope" value="Bacteria"/>
</dbReference>
<dbReference type="HOGENOM" id="CLU_022427_2_1_6"/>
<dbReference type="Proteomes" id="UP000000684">
    <property type="component" value="Chromosome"/>
</dbReference>
<dbReference type="GO" id="GO:0005737">
    <property type="term" value="C:cytoplasm"/>
    <property type="evidence" value="ECO:0007669"/>
    <property type="project" value="UniProtKB-SubCell"/>
</dbReference>
<dbReference type="GO" id="GO:0050660">
    <property type="term" value="F:flavin adenine dinucleotide binding"/>
    <property type="evidence" value="ECO:0007669"/>
    <property type="project" value="UniProtKB-UniRule"/>
</dbReference>
<dbReference type="GO" id="GO:0016645">
    <property type="term" value="F:oxidoreductase activity, acting on the CH-NH group of donors"/>
    <property type="evidence" value="ECO:0007669"/>
    <property type="project" value="InterPro"/>
</dbReference>
<dbReference type="GO" id="GO:0004808">
    <property type="term" value="F:tRNA (5-methylaminomethyl-2-thiouridylate)(34)-methyltransferase activity"/>
    <property type="evidence" value="ECO:0007669"/>
    <property type="project" value="UniProtKB-EC"/>
</dbReference>
<dbReference type="GO" id="GO:0032259">
    <property type="term" value="P:methylation"/>
    <property type="evidence" value="ECO:0007669"/>
    <property type="project" value="UniProtKB-KW"/>
</dbReference>
<dbReference type="GO" id="GO:0002098">
    <property type="term" value="P:tRNA wobble uridine modification"/>
    <property type="evidence" value="ECO:0007669"/>
    <property type="project" value="TreeGrafter"/>
</dbReference>
<dbReference type="Gene3D" id="3.30.9.10">
    <property type="entry name" value="D-Amino Acid Oxidase, subunit A, domain 2"/>
    <property type="match status" value="1"/>
</dbReference>
<dbReference type="Gene3D" id="3.50.50.60">
    <property type="entry name" value="FAD/NAD(P)-binding domain"/>
    <property type="match status" value="1"/>
</dbReference>
<dbReference type="Gene3D" id="3.40.50.150">
    <property type="entry name" value="Vaccinia Virus protein VP39"/>
    <property type="match status" value="1"/>
</dbReference>
<dbReference type="HAMAP" id="MF_01102">
    <property type="entry name" value="MnmC"/>
    <property type="match status" value="1"/>
</dbReference>
<dbReference type="InterPro" id="IPR006076">
    <property type="entry name" value="FAD-dep_OxRdtase"/>
</dbReference>
<dbReference type="InterPro" id="IPR036188">
    <property type="entry name" value="FAD/NAD-bd_sf"/>
</dbReference>
<dbReference type="InterPro" id="IPR029063">
    <property type="entry name" value="SAM-dependent_MTases_sf"/>
</dbReference>
<dbReference type="InterPro" id="IPR023032">
    <property type="entry name" value="tRNA_MAMT_biosynth_bifunc_MnmC"/>
</dbReference>
<dbReference type="InterPro" id="IPR017610">
    <property type="entry name" value="tRNA_S-uridine_synth_MnmC_C"/>
</dbReference>
<dbReference type="NCBIfam" id="TIGR03197">
    <property type="entry name" value="MnmC_Cterm"/>
    <property type="match status" value="1"/>
</dbReference>
<dbReference type="PANTHER" id="PTHR13847">
    <property type="entry name" value="SARCOSINE DEHYDROGENASE-RELATED"/>
    <property type="match status" value="1"/>
</dbReference>
<dbReference type="PANTHER" id="PTHR13847:SF283">
    <property type="entry name" value="TRNA 5-METHYLAMINOMETHYL-2-THIOURIDINE BIOSYNTHESIS BIFUNCTIONAL PROTEIN MNMC"/>
    <property type="match status" value="1"/>
</dbReference>
<dbReference type="Pfam" id="PF01266">
    <property type="entry name" value="DAO"/>
    <property type="match status" value="1"/>
</dbReference>
<dbReference type="SUPFAM" id="SSF51905">
    <property type="entry name" value="FAD/NAD(P)-binding domain"/>
    <property type="match status" value="1"/>
</dbReference>
<organism>
    <name type="scientific">Shewanella frigidimarina (strain NCIMB 400)</name>
    <dbReference type="NCBI Taxonomy" id="318167"/>
    <lineage>
        <taxon>Bacteria</taxon>
        <taxon>Pseudomonadati</taxon>
        <taxon>Pseudomonadota</taxon>
        <taxon>Gammaproteobacteria</taxon>
        <taxon>Alteromonadales</taxon>
        <taxon>Shewanellaceae</taxon>
        <taxon>Shewanella</taxon>
    </lineage>
</organism>
<feature type="chain" id="PRO_0000348027" description="tRNA 5-methylaminomethyl-2-thiouridine biosynthesis bifunctional protein MnmC">
    <location>
        <begin position="1"/>
        <end position="697"/>
    </location>
</feature>
<feature type="region of interest" description="tRNA (mnm(5)s(2)U34)-methyltransferase">
    <location>
        <begin position="1"/>
        <end position="269"/>
    </location>
</feature>
<feature type="region of interest" description="FAD-dependent cmnm(5)s(2)U34 oxidoreductase">
    <location>
        <begin position="287"/>
        <end position="697"/>
    </location>
</feature>
<reference key="1">
    <citation type="submission" date="2006-08" db="EMBL/GenBank/DDBJ databases">
        <title>Complete sequence of Shewanella frigidimarina NCIMB 400.</title>
        <authorList>
            <consortium name="US DOE Joint Genome Institute"/>
            <person name="Copeland A."/>
            <person name="Lucas S."/>
            <person name="Lapidus A."/>
            <person name="Barry K."/>
            <person name="Detter J.C."/>
            <person name="Glavina del Rio T."/>
            <person name="Hammon N."/>
            <person name="Israni S."/>
            <person name="Dalin E."/>
            <person name="Tice H."/>
            <person name="Pitluck S."/>
            <person name="Fredrickson J.K."/>
            <person name="Kolker E."/>
            <person name="McCuel L.A."/>
            <person name="DiChristina T."/>
            <person name="Nealson K.H."/>
            <person name="Newman D."/>
            <person name="Tiedje J.M."/>
            <person name="Zhou J."/>
            <person name="Romine M.F."/>
            <person name="Culley D.E."/>
            <person name="Serres M."/>
            <person name="Chertkov O."/>
            <person name="Brettin T."/>
            <person name="Bruce D."/>
            <person name="Han C."/>
            <person name="Tapia R."/>
            <person name="Gilna P."/>
            <person name="Schmutz J."/>
            <person name="Larimer F."/>
            <person name="Land M."/>
            <person name="Hauser L."/>
            <person name="Kyrpides N."/>
            <person name="Mikhailova N."/>
            <person name="Richardson P."/>
        </authorList>
    </citation>
    <scope>NUCLEOTIDE SEQUENCE [LARGE SCALE GENOMIC DNA]</scope>
    <source>
        <strain>NCIMB 400</strain>
    </source>
</reference>
<protein>
    <recommendedName>
        <fullName evidence="1">tRNA 5-methylaminomethyl-2-thiouridine biosynthesis bifunctional protein MnmC</fullName>
        <shortName evidence="1">tRNA mnm(5)s(2)U biosynthesis bifunctional protein</shortName>
    </recommendedName>
    <domain>
        <recommendedName>
            <fullName evidence="1">tRNA (mnm(5)s(2)U34)-methyltransferase</fullName>
            <ecNumber evidence="1">2.1.1.61</ecNumber>
        </recommendedName>
    </domain>
    <domain>
        <recommendedName>
            <fullName evidence="1">FAD-dependent cmnm(5)s(2)U34 oxidoreductase</fullName>
            <ecNumber evidence="1">1.5.-.-</ecNumber>
        </recommendedName>
    </domain>
</protein>
<accession>Q084S3</accession>
<evidence type="ECO:0000255" key="1">
    <source>
        <dbReference type="HAMAP-Rule" id="MF_01102"/>
    </source>
</evidence>
<proteinExistence type="inferred from homology"/>